<gene>
    <name type="primary">xlnR</name>
    <name type="ORF">AO090012000267</name>
</gene>
<dbReference type="EMBL" id="AB042843">
    <property type="protein sequence ID" value="BAA95967.1"/>
    <property type="molecule type" value="Genomic_DNA"/>
</dbReference>
<dbReference type="EMBL" id="BA000052">
    <property type="protein sequence ID" value="BAE60472.1"/>
    <property type="status" value="ALT_SEQ"/>
    <property type="molecule type" value="Genomic_DNA"/>
</dbReference>
<dbReference type="STRING" id="510516.Q2UD93"/>
<dbReference type="VEuPathDB" id="FungiDB:AO090012000267"/>
<dbReference type="Proteomes" id="UP000006564">
    <property type="component" value="Chromosome 4"/>
</dbReference>
<dbReference type="GO" id="GO:0005634">
    <property type="term" value="C:nucleus"/>
    <property type="evidence" value="ECO:0007669"/>
    <property type="project" value="UniProtKB-SubCell"/>
</dbReference>
<dbReference type="GO" id="GO:0003677">
    <property type="term" value="F:DNA binding"/>
    <property type="evidence" value="ECO:0007669"/>
    <property type="project" value="UniProtKB-KW"/>
</dbReference>
<dbReference type="GO" id="GO:0000981">
    <property type="term" value="F:DNA-binding transcription factor activity, RNA polymerase II-specific"/>
    <property type="evidence" value="ECO:0007669"/>
    <property type="project" value="InterPro"/>
</dbReference>
<dbReference type="GO" id="GO:0008270">
    <property type="term" value="F:zinc ion binding"/>
    <property type="evidence" value="ECO:0007669"/>
    <property type="project" value="InterPro"/>
</dbReference>
<dbReference type="GO" id="GO:0006351">
    <property type="term" value="P:DNA-templated transcription"/>
    <property type="evidence" value="ECO:0007669"/>
    <property type="project" value="InterPro"/>
</dbReference>
<dbReference type="GO" id="GO:2000999">
    <property type="term" value="P:positive regulation of cellulose catabolic process"/>
    <property type="evidence" value="ECO:0000315"/>
    <property type="project" value="AspGD"/>
</dbReference>
<dbReference type="GO" id="GO:0045893">
    <property type="term" value="P:positive regulation of DNA-templated transcription"/>
    <property type="evidence" value="ECO:0000250"/>
    <property type="project" value="UniProtKB"/>
</dbReference>
<dbReference type="GO" id="GO:2001002">
    <property type="term" value="P:positive regulation of xylan catabolic process"/>
    <property type="evidence" value="ECO:0000314"/>
    <property type="project" value="AspGD"/>
</dbReference>
<dbReference type="GO" id="GO:0006357">
    <property type="term" value="P:regulation of transcription by RNA polymerase II"/>
    <property type="evidence" value="ECO:0000315"/>
    <property type="project" value="AspGD"/>
</dbReference>
<dbReference type="GO" id="GO:0045493">
    <property type="term" value="P:xylan catabolic process"/>
    <property type="evidence" value="ECO:0000250"/>
    <property type="project" value="UniProtKB"/>
</dbReference>
<dbReference type="CDD" id="cd12148">
    <property type="entry name" value="fungal_TF_MHR"/>
    <property type="match status" value="1"/>
</dbReference>
<dbReference type="CDD" id="cd00067">
    <property type="entry name" value="GAL4"/>
    <property type="match status" value="1"/>
</dbReference>
<dbReference type="FunFam" id="4.10.240.10:FF:000004">
    <property type="entry name" value="Xylanolytic transcriptional activator XlnR"/>
    <property type="match status" value="1"/>
</dbReference>
<dbReference type="Gene3D" id="4.10.240.10">
    <property type="entry name" value="Zn(2)-C6 fungal-type DNA-binding domain"/>
    <property type="match status" value="1"/>
</dbReference>
<dbReference type="InterPro" id="IPR007219">
    <property type="entry name" value="Transcription_factor_dom_fun"/>
</dbReference>
<dbReference type="InterPro" id="IPR051439">
    <property type="entry name" value="XlnR/Xlr1"/>
</dbReference>
<dbReference type="InterPro" id="IPR036864">
    <property type="entry name" value="Zn2-C6_fun-type_DNA-bd_sf"/>
</dbReference>
<dbReference type="InterPro" id="IPR001138">
    <property type="entry name" value="Zn2Cys6_DnaBD"/>
</dbReference>
<dbReference type="PANTHER" id="PTHR47663">
    <property type="entry name" value="XYLANOLYTIC TRANSCRIPTIONAL ACTIVATOR XLNR-RELATED"/>
    <property type="match status" value="1"/>
</dbReference>
<dbReference type="PANTHER" id="PTHR47663:SF1">
    <property type="entry name" value="XYLANOLYTIC TRANSCRIPTIONAL ACTIVATOR XLNR-RELATED"/>
    <property type="match status" value="1"/>
</dbReference>
<dbReference type="Pfam" id="PF04082">
    <property type="entry name" value="Fungal_trans"/>
    <property type="match status" value="1"/>
</dbReference>
<dbReference type="Pfam" id="PF00172">
    <property type="entry name" value="Zn_clus"/>
    <property type="match status" value="1"/>
</dbReference>
<dbReference type="SMART" id="SM00906">
    <property type="entry name" value="Fungal_trans"/>
    <property type="match status" value="1"/>
</dbReference>
<dbReference type="SMART" id="SM00066">
    <property type="entry name" value="GAL4"/>
    <property type="match status" value="1"/>
</dbReference>
<dbReference type="SUPFAM" id="SSF57701">
    <property type="entry name" value="Zn2/Cys6 DNA-binding domain"/>
    <property type="match status" value="1"/>
</dbReference>
<dbReference type="PROSITE" id="PS50048">
    <property type="entry name" value="ZN2_CY6_FUNGAL_2"/>
    <property type="match status" value="1"/>
</dbReference>
<organism>
    <name type="scientific">Aspergillus oryzae (strain ATCC 42149 / RIB 40)</name>
    <name type="common">Yellow koji mold</name>
    <dbReference type="NCBI Taxonomy" id="510516"/>
    <lineage>
        <taxon>Eukaryota</taxon>
        <taxon>Fungi</taxon>
        <taxon>Dikarya</taxon>
        <taxon>Ascomycota</taxon>
        <taxon>Pezizomycotina</taxon>
        <taxon>Eurotiomycetes</taxon>
        <taxon>Eurotiomycetidae</taxon>
        <taxon>Eurotiales</taxon>
        <taxon>Aspergillaceae</taxon>
        <taxon>Aspergillus</taxon>
        <taxon>Aspergillus subgen. Circumdati</taxon>
    </lineage>
</organism>
<protein>
    <recommendedName>
        <fullName>Xylanolytic transcriptional activator xlnR</fullName>
    </recommendedName>
    <alternativeName>
        <fullName>Xylanase regulator</fullName>
    </alternativeName>
</protein>
<proteinExistence type="evidence at protein level"/>
<keyword id="KW-0010">Activator</keyword>
<keyword id="KW-0238">DNA-binding</keyword>
<keyword id="KW-0479">Metal-binding</keyword>
<keyword id="KW-0539">Nucleus</keyword>
<keyword id="KW-1185">Reference proteome</keyword>
<keyword id="KW-0804">Transcription</keyword>
<keyword id="KW-0805">Transcription regulation</keyword>
<keyword id="KW-0862">Zinc</keyword>
<accession>Q2UD93</accession>
<accession>Q9P953</accession>
<reference key="1">
    <citation type="journal article" date="2002" name="Fungal Genet. Biol.">
        <title>A transcriptional activator, AoXlnR, controls the expression of genes encoding xylanolytic enzymes in Aspergillus oryzae.</title>
        <authorList>
            <person name="Marui J."/>
            <person name="Tanaka A."/>
            <person name="Mimura S."/>
            <person name="de Graaff L.H."/>
            <person name="Visser J."/>
            <person name="Kitamoto N."/>
            <person name="Kato M."/>
            <person name="Kobayashi T."/>
            <person name="Tsukagoshi N."/>
        </authorList>
    </citation>
    <scope>NUCLEOTIDE SEQUENCE [GENOMIC DNA]</scope>
    <scope>FUNCTION</scope>
    <scope>DNA-BINDING</scope>
</reference>
<reference key="2">
    <citation type="journal article" date="2005" name="Nature">
        <title>Genome sequencing and analysis of Aspergillus oryzae.</title>
        <authorList>
            <person name="Machida M."/>
            <person name="Asai K."/>
            <person name="Sano M."/>
            <person name="Tanaka T."/>
            <person name="Kumagai T."/>
            <person name="Terai G."/>
            <person name="Kusumoto K."/>
            <person name="Arima T."/>
            <person name="Akita O."/>
            <person name="Kashiwagi Y."/>
            <person name="Abe K."/>
            <person name="Gomi K."/>
            <person name="Horiuchi H."/>
            <person name="Kitamoto K."/>
            <person name="Kobayashi T."/>
            <person name="Takeuchi M."/>
            <person name="Denning D.W."/>
            <person name="Galagan J.E."/>
            <person name="Nierman W.C."/>
            <person name="Yu J."/>
            <person name="Archer D.B."/>
            <person name="Bennett J.W."/>
            <person name="Bhatnagar D."/>
            <person name="Cleveland T.E."/>
            <person name="Fedorova N.D."/>
            <person name="Gotoh O."/>
            <person name="Horikawa H."/>
            <person name="Hosoyama A."/>
            <person name="Ichinomiya M."/>
            <person name="Igarashi R."/>
            <person name="Iwashita K."/>
            <person name="Juvvadi P.R."/>
            <person name="Kato M."/>
            <person name="Kato Y."/>
            <person name="Kin T."/>
            <person name="Kokubun A."/>
            <person name="Maeda H."/>
            <person name="Maeyama N."/>
            <person name="Maruyama J."/>
            <person name="Nagasaki H."/>
            <person name="Nakajima T."/>
            <person name="Oda K."/>
            <person name="Okada K."/>
            <person name="Paulsen I."/>
            <person name="Sakamoto K."/>
            <person name="Sawano T."/>
            <person name="Takahashi M."/>
            <person name="Takase K."/>
            <person name="Terabayashi Y."/>
            <person name="Wortman J.R."/>
            <person name="Yamada O."/>
            <person name="Yamagata Y."/>
            <person name="Anazawa H."/>
            <person name="Hata Y."/>
            <person name="Koide Y."/>
            <person name="Komori T."/>
            <person name="Koyama Y."/>
            <person name="Minetoki T."/>
            <person name="Suharnan S."/>
            <person name="Tanaka A."/>
            <person name="Isono K."/>
            <person name="Kuhara S."/>
            <person name="Ogasawara N."/>
            <person name="Kikuchi H."/>
        </authorList>
    </citation>
    <scope>NUCLEOTIDE SEQUENCE [LARGE SCALE GENOMIC DNA]</scope>
    <source>
        <strain>ATCC 42149 / RIB 40</strain>
    </source>
</reference>
<reference key="3">
    <citation type="journal article" date="2002" name="FEBS Lett.">
        <title>Transcriptional activator, AoXlnR, mediates cellulose-inductive expression of the xylanolytic and cellulolytic genes in Aspergillus oryzae.</title>
        <authorList>
            <person name="Marui J."/>
            <person name="Kitamoto N."/>
            <person name="Kato M."/>
            <person name="Kobayashi T."/>
            <person name="Tsukagoshi N."/>
        </authorList>
    </citation>
    <scope>FUNCTION</scope>
</reference>
<reference key="4">
    <citation type="journal article" date="2008" name="Proc. Natl. Acad. Sci. U.S.A.">
        <title>A trispecies Aspergillus microarray: comparative transcriptomics of three Aspergillus species.</title>
        <authorList>
            <person name="Andersen M.R."/>
            <person name="Vongsangnak W."/>
            <person name="Panagiotou G."/>
            <person name="Salazar M.P."/>
            <person name="Lehmann L."/>
            <person name="Nielsen J."/>
        </authorList>
    </citation>
    <scope>INDUCTION</scope>
    <scope>FUNCTION</scope>
</reference>
<reference key="5">
    <citation type="journal article" date="2009" name="Appl. Microbiol. Biotechnol.">
        <title>Genes regulated by AoXlnR, the xylanolytic and cellulolytic transcriptional regulator, in Aspergillus oryzae.</title>
        <authorList>
            <person name="Noguchi Y."/>
            <person name="Sano M."/>
            <person name="Kanamaru K."/>
            <person name="Ko T."/>
            <person name="Takeuchi M."/>
            <person name="Kato M."/>
            <person name="Kobayashi T."/>
        </authorList>
    </citation>
    <scope>FUNCTION</scope>
</reference>
<name>XLNR_ASPOR</name>
<feature type="chain" id="PRO_0000393154" description="Xylanolytic transcriptional activator xlnR">
    <location>
        <begin position="1"/>
        <end position="971"/>
    </location>
</feature>
<feature type="DNA-binding region" description="Zn(2)-C6 fungal-type" evidence="1">
    <location>
        <begin position="129"/>
        <end position="155"/>
    </location>
</feature>
<feature type="region of interest" description="Disordered" evidence="2">
    <location>
        <begin position="1"/>
        <end position="25"/>
    </location>
</feature>
<feature type="region of interest" description="Disordered" evidence="2">
    <location>
        <begin position="55"/>
        <end position="123"/>
    </location>
</feature>
<feature type="region of interest" description="Disordered" evidence="2">
    <location>
        <begin position="182"/>
        <end position="263"/>
    </location>
</feature>
<feature type="region of interest" description="Disordered" evidence="2">
    <location>
        <begin position="295"/>
        <end position="316"/>
    </location>
</feature>
<feature type="region of interest" description="Disordered" evidence="2">
    <location>
        <begin position="580"/>
        <end position="610"/>
    </location>
</feature>
<feature type="compositionally biased region" description="Low complexity" evidence="2">
    <location>
        <begin position="9"/>
        <end position="18"/>
    </location>
</feature>
<feature type="compositionally biased region" description="Polar residues" evidence="2">
    <location>
        <begin position="67"/>
        <end position="96"/>
    </location>
</feature>
<feature type="compositionally biased region" description="Polar residues" evidence="2">
    <location>
        <begin position="182"/>
        <end position="199"/>
    </location>
</feature>
<feature type="compositionally biased region" description="Polar residues" evidence="2">
    <location>
        <begin position="227"/>
        <end position="241"/>
    </location>
</feature>
<feature type="compositionally biased region" description="Polar residues" evidence="2">
    <location>
        <begin position="249"/>
        <end position="260"/>
    </location>
</feature>
<sequence>MSTTSIQHFTSSFSPFSSGTQPVGMAQSQTVGLDTLAEGSQYALEQLQLSREANGASAVDGGVPNPLRSSISKPQGQQLYSDESSAQHTQNATTGFRNLPQRDQLAEARSTIRKSSNSGPVRRRISRACDQCNQLRTKCDGQNPCAHCIEFGLTCEYARERKKRGKASKKDLAAAAAAVANNGTAPTSNGNTSNDSVSSAKRHTPSDGQSTQEVSGRYDPNFDASRNLATAGQSQLGQHSDMSGMAGMQGSQQTPHSQPSLGGAIDAIHLNHFNTLNDSNRPQMSVPDLRSLQMLHPSGANTRSPSGALPPQGMNSGYNDGAYSLMNASEANHPSINQYRLGNSAENPPAPFLGLSPPAQSPGWLSLPSPSPANFASFSMPPFSSTLRYPVLQPVLPHIASIIPQSLACDLLDVYFTSFSPSHLSPQSPYVVGYIFRKQSFLHPTKPRVCSPGLLASMLWVAAQTSDAAFLTSPPSARGRVCQKLLELTVGLLRPLIHGPAPGETSPNYAANMVINGVALGGFGVSMDQLGAQSSATGAVDDVATYVHLATVISASEYKAASMRWWTAAWSLARELKLGRELPPNAPQPRQDGEPEDDTDVDMSKRNLPPLITSVGGNSGSTILNVTEEEREERRRLWWLLYATDRHLALCYNRPLTLLDKECEGLLQPMNDDLWQAGDFAGATYRQVGPQVECTGHSMFGFFLPLMTILGEIVDLQQAKEHPRFGRVFRNSADWDHQVLEITRQLDTYAQSLKEFEARYTSSLALGAGESEAAIEGSHLDHVSPSGRSTSTAGSRVNESIVHTKMVVAYGTHIMHVLHVLLAGKWDPINLLEDHDLWISSESFIAAMSHAVGAADAAADILEYDPDITFMPFFFGIYLLQGSFLLLLAADKLQGDVSPSVVRACETIVRAHEACVVTLNTEYQRTFRKVMRSALAQVRGRMPEDFGEQQQRRREVLALYRWTGDGSGLAL</sequence>
<evidence type="ECO:0000255" key="1">
    <source>
        <dbReference type="PROSITE-ProRule" id="PRU00227"/>
    </source>
</evidence>
<evidence type="ECO:0000256" key="2">
    <source>
        <dbReference type="SAM" id="MobiDB-lite"/>
    </source>
</evidence>
<evidence type="ECO:0000269" key="3">
    <source>
    </source>
</evidence>
<evidence type="ECO:0000269" key="4">
    <source>
    </source>
</evidence>
<evidence type="ECO:0000269" key="5">
    <source>
    </source>
</evidence>
<evidence type="ECO:0000269" key="6">
    <source>
    </source>
</evidence>
<evidence type="ECO:0000305" key="7"/>
<comment type="function">
    <text evidence="3 4 5 6">Transcriptional activator of the xylanolytic system. Involved in the regulation of extracellular cellulolytic and xylanolytic genes and in the regulation of the intracellular activities of D-xylose catabolic genes in the pentose catabolic pathway (PCP) in response to the presence of D-xylose. Binds to the DNA sequence 5'-GGNTAAA-3'.</text>
</comment>
<comment type="subcellular location">
    <subcellularLocation>
        <location evidence="1">Nucleus</location>
    </subcellularLocation>
</comment>
<comment type="induction">
    <text evidence="5">Expressed in presence of xylose.</text>
</comment>
<comment type="similarity">
    <text evidence="7">Belongs to the xlnR/xlr1 family.</text>
</comment>
<comment type="sequence caution" evidence="7">
    <conflict type="erroneous gene model prediction">
        <sequence resource="EMBL-CDS" id="BAE60472"/>
    </conflict>
</comment>